<accession>B3GY04</accession>
<organism>
    <name type="scientific">Actinobacillus pleuropneumoniae serotype 7 (strain AP76)</name>
    <dbReference type="NCBI Taxonomy" id="537457"/>
    <lineage>
        <taxon>Bacteria</taxon>
        <taxon>Pseudomonadati</taxon>
        <taxon>Pseudomonadota</taxon>
        <taxon>Gammaproteobacteria</taxon>
        <taxon>Pasteurellales</taxon>
        <taxon>Pasteurellaceae</taxon>
        <taxon>Actinobacillus</taxon>
    </lineage>
</organism>
<feature type="chain" id="PRO_1000096231" description="Iron-sulfur cluster assembly protein CyaY">
    <location>
        <begin position="1"/>
        <end position="101"/>
    </location>
</feature>
<evidence type="ECO:0000255" key="1">
    <source>
        <dbReference type="HAMAP-Rule" id="MF_00142"/>
    </source>
</evidence>
<name>CYAY_ACTP7</name>
<dbReference type="EMBL" id="CP001091">
    <property type="protein sequence ID" value="ACE61827.1"/>
    <property type="molecule type" value="Genomic_DNA"/>
</dbReference>
<dbReference type="RefSeq" id="WP_005608334.1">
    <property type="nucleotide sequence ID" value="NC_010939.1"/>
</dbReference>
<dbReference type="SMR" id="B3GY04"/>
<dbReference type="KEGG" id="apa:APP7_1175"/>
<dbReference type="HOGENOM" id="CLU_080880_3_0_6"/>
<dbReference type="Proteomes" id="UP000001226">
    <property type="component" value="Chromosome"/>
</dbReference>
<dbReference type="GO" id="GO:0005737">
    <property type="term" value="C:cytoplasm"/>
    <property type="evidence" value="ECO:0007669"/>
    <property type="project" value="UniProtKB-ARBA"/>
</dbReference>
<dbReference type="GO" id="GO:0008199">
    <property type="term" value="F:ferric iron binding"/>
    <property type="evidence" value="ECO:0007669"/>
    <property type="project" value="InterPro"/>
</dbReference>
<dbReference type="GO" id="GO:0016226">
    <property type="term" value="P:iron-sulfur cluster assembly"/>
    <property type="evidence" value="ECO:0007669"/>
    <property type="project" value="UniProtKB-UniRule"/>
</dbReference>
<dbReference type="Gene3D" id="3.30.920.10">
    <property type="entry name" value="Frataxin/CyaY"/>
    <property type="match status" value="1"/>
</dbReference>
<dbReference type="HAMAP" id="MF_00142">
    <property type="entry name" value="CyaY"/>
    <property type="match status" value="1"/>
</dbReference>
<dbReference type="InterPro" id="IPR047584">
    <property type="entry name" value="CyaY"/>
</dbReference>
<dbReference type="InterPro" id="IPR002908">
    <property type="entry name" value="Frataxin/CyaY"/>
</dbReference>
<dbReference type="InterPro" id="IPR036524">
    <property type="entry name" value="Frataxin/CyaY_sf"/>
</dbReference>
<dbReference type="InterPro" id="IPR020895">
    <property type="entry name" value="Frataxin_CS"/>
</dbReference>
<dbReference type="NCBIfam" id="TIGR03421">
    <property type="entry name" value="FeS_CyaY"/>
    <property type="match status" value="1"/>
</dbReference>
<dbReference type="Pfam" id="PF01491">
    <property type="entry name" value="Frataxin_Cyay"/>
    <property type="match status" value="1"/>
</dbReference>
<dbReference type="SMART" id="SM01219">
    <property type="entry name" value="Frataxin_Cyay"/>
    <property type="match status" value="1"/>
</dbReference>
<dbReference type="SUPFAM" id="SSF55387">
    <property type="entry name" value="Frataxin/Nqo15-like"/>
    <property type="match status" value="1"/>
</dbReference>
<dbReference type="PROSITE" id="PS01344">
    <property type="entry name" value="FRATAXIN_1"/>
    <property type="match status" value="1"/>
</dbReference>
<dbReference type="PROSITE" id="PS50810">
    <property type="entry name" value="FRATAXIN_2"/>
    <property type="match status" value="1"/>
</dbReference>
<comment type="function">
    <text evidence="1">Involved in iron-sulfur (Fe-S) cluster assembly. May act as a regulator of Fe-S biogenesis.</text>
</comment>
<comment type="similarity">
    <text evidence="1">Belongs to the frataxin family.</text>
</comment>
<protein>
    <recommendedName>
        <fullName evidence="1">Iron-sulfur cluster assembly protein CyaY</fullName>
    </recommendedName>
</protein>
<proteinExistence type="inferred from homology"/>
<reference key="1">
    <citation type="submission" date="2008-06" db="EMBL/GenBank/DDBJ databases">
        <title>Genome and proteome analysis of A. pleuropneumoniae serotype 7.</title>
        <authorList>
            <person name="Linke B."/>
            <person name="Buettner F."/>
            <person name="Martinez-Arias R."/>
            <person name="Goesmann A."/>
            <person name="Baltes N."/>
            <person name="Tegetmeyer H."/>
            <person name="Singh M."/>
            <person name="Gerlach G.F."/>
        </authorList>
    </citation>
    <scope>NUCLEOTIDE SEQUENCE [LARGE SCALE GENOMIC DNA]</scope>
    <source>
        <strain>AP76</strain>
    </source>
</reference>
<gene>
    <name evidence="1" type="primary">cyaY</name>
    <name type="ordered locus">APP7_1175</name>
</gene>
<sequence>MNVAEFHQKVEQVWQQIEEKIDDEALSIDTEIHGAVCTLTFDDESQIIINKQEAMLELWLASKLGGFHFAFRDCEWVTAEGRSFWAHLEEAFARHGEQISF</sequence>
<keyword id="KW-0408">Iron</keyword>
<keyword id="KW-0479">Metal-binding</keyword>